<protein>
    <recommendedName>
        <fullName evidence="1">Catalase-peroxidase</fullName>
        <shortName evidence="1">CP</shortName>
        <ecNumber evidence="1">1.11.1.21</ecNumber>
    </recommendedName>
    <alternativeName>
        <fullName evidence="1">Peroxidase/catalase</fullName>
    </alternativeName>
</protein>
<proteinExistence type="inferred from homology"/>
<gene>
    <name evidence="1" type="primary">katG</name>
    <name type="ordered locus">SSPA3678</name>
</gene>
<organism>
    <name type="scientific">Salmonella paratyphi A (strain AKU_12601)</name>
    <dbReference type="NCBI Taxonomy" id="554290"/>
    <lineage>
        <taxon>Bacteria</taxon>
        <taxon>Pseudomonadati</taxon>
        <taxon>Pseudomonadota</taxon>
        <taxon>Gammaproteobacteria</taxon>
        <taxon>Enterobacterales</taxon>
        <taxon>Enterobacteriaceae</taxon>
        <taxon>Salmonella</taxon>
    </lineage>
</organism>
<dbReference type="EC" id="1.11.1.21" evidence="1"/>
<dbReference type="EMBL" id="FM200053">
    <property type="protein sequence ID" value="CAR61961.1"/>
    <property type="molecule type" value="Genomic_DNA"/>
</dbReference>
<dbReference type="RefSeq" id="WP_000108111.1">
    <property type="nucleotide sequence ID" value="NC_011147.1"/>
</dbReference>
<dbReference type="SMR" id="B5BJM5"/>
<dbReference type="KEGG" id="sek:SSPA3678"/>
<dbReference type="HOGENOM" id="CLU_025424_2_0_6"/>
<dbReference type="Proteomes" id="UP000001869">
    <property type="component" value="Chromosome"/>
</dbReference>
<dbReference type="GO" id="GO:0005829">
    <property type="term" value="C:cytosol"/>
    <property type="evidence" value="ECO:0007669"/>
    <property type="project" value="TreeGrafter"/>
</dbReference>
<dbReference type="GO" id="GO:0004096">
    <property type="term" value="F:catalase activity"/>
    <property type="evidence" value="ECO:0007669"/>
    <property type="project" value="UniProtKB-UniRule"/>
</dbReference>
<dbReference type="GO" id="GO:0020037">
    <property type="term" value="F:heme binding"/>
    <property type="evidence" value="ECO:0007669"/>
    <property type="project" value="InterPro"/>
</dbReference>
<dbReference type="GO" id="GO:0046872">
    <property type="term" value="F:metal ion binding"/>
    <property type="evidence" value="ECO:0007669"/>
    <property type="project" value="UniProtKB-KW"/>
</dbReference>
<dbReference type="GO" id="GO:0070301">
    <property type="term" value="P:cellular response to hydrogen peroxide"/>
    <property type="evidence" value="ECO:0007669"/>
    <property type="project" value="TreeGrafter"/>
</dbReference>
<dbReference type="GO" id="GO:0042744">
    <property type="term" value="P:hydrogen peroxide catabolic process"/>
    <property type="evidence" value="ECO:0007669"/>
    <property type="project" value="UniProtKB-KW"/>
</dbReference>
<dbReference type="CDD" id="cd08200">
    <property type="entry name" value="catalase_peroxidase_2"/>
    <property type="match status" value="1"/>
</dbReference>
<dbReference type="FunFam" id="1.10.420.10:FF:000002">
    <property type="entry name" value="Catalase-peroxidase"/>
    <property type="match status" value="1"/>
</dbReference>
<dbReference type="FunFam" id="1.10.420.10:FF:000004">
    <property type="entry name" value="Catalase-peroxidase"/>
    <property type="match status" value="1"/>
</dbReference>
<dbReference type="FunFam" id="1.10.520.10:FF:000002">
    <property type="entry name" value="Catalase-peroxidase"/>
    <property type="match status" value="1"/>
</dbReference>
<dbReference type="Gene3D" id="1.10.520.10">
    <property type="match status" value="2"/>
</dbReference>
<dbReference type="Gene3D" id="1.10.420.10">
    <property type="entry name" value="Peroxidase, domain 2"/>
    <property type="match status" value="2"/>
</dbReference>
<dbReference type="HAMAP" id="MF_01961">
    <property type="entry name" value="Catal_peroxid"/>
    <property type="match status" value="1"/>
</dbReference>
<dbReference type="InterPro" id="IPR000763">
    <property type="entry name" value="Catalase_peroxidase"/>
</dbReference>
<dbReference type="InterPro" id="IPR002016">
    <property type="entry name" value="Haem_peroxidase"/>
</dbReference>
<dbReference type="InterPro" id="IPR010255">
    <property type="entry name" value="Haem_peroxidase_sf"/>
</dbReference>
<dbReference type="InterPro" id="IPR019794">
    <property type="entry name" value="Peroxidases_AS"/>
</dbReference>
<dbReference type="InterPro" id="IPR019793">
    <property type="entry name" value="Peroxidases_heam-ligand_BS"/>
</dbReference>
<dbReference type="NCBIfam" id="TIGR00198">
    <property type="entry name" value="cat_per_HPI"/>
    <property type="match status" value="1"/>
</dbReference>
<dbReference type="NCBIfam" id="NF011635">
    <property type="entry name" value="PRK15061.1"/>
    <property type="match status" value="1"/>
</dbReference>
<dbReference type="PANTHER" id="PTHR30555:SF0">
    <property type="entry name" value="CATALASE-PEROXIDASE"/>
    <property type="match status" value="1"/>
</dbReference>
<dbReference type="PANTHER" id="PTHR30555">
    <property type="entry name" value="HYDROPEROXIDASE I, BIFUNCTIONAL CATALASE-PEROXIDASE"/>
    <property type="match status" value="1"/>
</dbReference>
<dbReference type="Pfam" id="PF00141">
    <property type="entry name" value="peroxidase"/>
    <property type="match status" value="2"/>
</dbReference>
<dbReference type="PRINTS" id="PR00460">
    <property type="entry name" value="BPEROXIDASE"/>
</dbReference>
<dbReference type="PRINTS" id="PR00458">
    <property type="entry name" value="PEROXIDASE"/>
</dbReference>
<dbReference type="SUPFAM" id="SSF48113">
    <property type="entry name" value="Heme-dependent peroxidases"/>
    <property type="match status" value="2"/>
</dbReference>
<dbReference type="PROSITE" id="PS00435">
    <property type="entry name" value="PEROXIDASE_1"/>
    <property type="match status" value="1"/>
</dbReference>
<dbReference type="PROSITE" id="PS00436">
    <property type="entry name" value="PEROXIDASE_2"/>
    <property type="match status" value="1"/>
</dbReference>
<dbReference type="PROSITE" id="PS50873">
    <property type="entry name" value="PEROXIDASE_4"/>
    <property type="match status" value="1"/>
</dbReference>
<evidence type="ECO:0000255" key="1">
    <source>
        <dbReference type="HAMAP-Rule" id="MF_01961"/>
    </source>
</evidence>
<evidence type="ECO:0000256" key="2">
    <source>
        <dbReference type="SAM" id="MobiDB-lite"/>
    </source>
</evidence>
<accession>B5BJM5</accession>
<keyword id="KW-0349">Heme</keyword>
<keyword id="KW-0376">Hydrogen peroxide</keyword>
<keyword id="KW-0408">Iron</keyword>
<keyword id="KW-0479">Metal-binding</keyword>
<keyword id="KW-0560">Oxidoreductase</keyword>
<keyword id="KW-0575">Peroxidase</keyword>
<name>KATG_SALPK</name>
<sequence>MSTTDDTHNTLSTGKCPFHQGGHDRSAGAGTASRDWWPNQLRVDLLNQHSNRSNPLGEDFDYRKEFSKLDYSALKGDLKALLTDSQPWWPADWGSYVGLFIRMAWHGAGTYRSIDGRGGAGRGQQRFAPLNSWPDNVSLDKARRLLWPIKQKYGQKISWADLFILAGNVALENSGFRTFGFGAGREDVWEPDLDVNWGDEKAWLTHRHPEALAKAPLGATEMGLIYVNPEGPDHSGEPLSAAAAIRATFGNMGMNDEETVALIAGGHTLGKTHGAAAASHVGADPEAAPIEAQGLGWASSYGSGVGADAITSGLEVVWTQTPTQWSNYFFENLFKYEWVQTRSPAGAIQFEAVDAPDIIPDPFDPSKKRKPTMLVTDLTLRFDPEFEKISRRFLNDPQAFNEAFARAWFKLTHRDMGPKARYIGPEVPKEDLIWQDPLPQPLYQPTQEDIINLKAAIAASGLSISEMVSVAWASASTFRGGDKRGGANGARLALAPQRDWEVNAVAARVLPVLEALQKTTNKASLADIIVLAGVVGIEQAAAAAGVSISVPFAPGRVDARQDQTDIEMFSLLEPIADGFRNYRARLDVSTTESLLIDKAQQLTLTAPEMTVLVGGMRVLGTNFDGSQNGVFTDRPGVLSTDFFANLLDMRYEWKPTDESNELFEGRDRLTGEVKYTATRADLVFGSNSVLRALAEVYACSDAHEKFVKDFVAAWVKVMNLDRFDLL</sequence>
<reference key="1">
    <citation type="journal article" date="2009" name="BMC Genomics">
        <title>Pseudogene accumulation in the evolutionary histories of Salmonella enterica serovars Paratyphi A and Typhi.</title>
        <authorList>
            <person name="Holt K.E."/>
            <person name="Thomson N.R."/>
            <person name="Wain J."/>
            <person name="Langridge G.C."/>
            <person name="Hasan R."/>
            <person name="Bhutta Z.A."/>
            <person name="Quail M.A."/>
            <person name="Norbertczak H."/>
            <person name="Walker D."/>
            <person name="Simmonds M."/>
            <person name="White B."/>
            <person name="Bason N."/>
            <person name="Mungall K."/>
            <person name="Dougan G."/>
            <person name="Parkhill J."/>
        </authorList>
    </citation>
    <scope>NUCLEOTIDE SEQUENCE [LARGE SCALE GENOMIC DNA]</scope>
    <source>
        <strain>AKU_12601</strain>
    </source>
</reference>
<comment type="function">
    <text evidence="1">Bifunctional enzyme with both catalase and broad-spectrum peroxidase activity.</text>
</comment>
<comment type="catalytic activity">
    <reaction evidence="1">
        <text>H2O2 + AH2 = A + 2 H2O</text>
        <dbReference type="Rhea" id="RHEA:30275"/>
        <dbReference type="ChEBI" id="CHEBI:13193"/>
        <dbReference type="ChEBI" id="CHEBI:15377"/>
        <dbReference type="ChEBI" id="CHEBI:16240"/>
        <dbReference type="ChEBI" id="CHEBI:17499"/>
        <dbReference type="EC" id="1.11.1.21"/>
    </reaction>
</comment>
<comment type="catalytic activity">
    <reaction evidence="1">
        <text>2 H2O2 = O2 + 2 H2O</text>
        <dbReference type="Rhea" id="RHEA:20309"/>
        <dbReference type="ChEBI" id="CHEBI:15377"/>
        <dbReference type="ChEBI" id="CHEBI:15379"/>
        <dbReference type="ChEBI" id="CHEBI:16240"/>
        <dbReference type="EC" id="1.11.1.21"/>
    </reaction>
</comment>
<comment type="cofactor">
    <cofactor evidence="1">
        <name>heme b</name>
        <dbReference type="ChEBI" id="CHEBI:60344"/>
    </cofactor>
    <text evidence="1">Binds 1 heme b (iron(II)-protoporphyrin IX) group per dimer.</text>
</comment>
<comment type="subunit">
    <text evidence="1">Homodimer or homotetramer.</text>
</comment>
<comment type="PTM">
    <text evidence="1">Formation of the three residue Trp-Tyr-Met cross-link is important for the catalase, but not the peroxidase activity of the enzyme.</text>
</comment>
<comment type="similarity">
    <text evidence="1">Belongs to the peroxidase family. Peroxidase/catalase subfamily.</text>
</comment>
<feature type="chain" id="PRO_0000354909" description="Catalase-peroxidase">
    <location>
        <begin position="1"/>
        <end position="726"/>
    </location>
</feature>
<feature type="region of interest" description="Disordered" evidence="2">
    <location>
        <begin position="1"/>
        <end position="33"/>
    </location>
</feature>
<feature type="active site" description="Proton acceptor" evidence="1">
    <location>
        <position position="106"/>
    </location>
</feature>
<feature type="binding site" description="axial binding residue" evidence="1">
    <location>
        <position position="267"/>
    </location>
    <ligand>
        <name>heme b</name>
        <dbReference type="ChEBI" id="CHEBI:60344"/>
    </ligand>
    <ligandPart>
        <name>Fe</name>
        <dbReference type="ChEBI" id="CHEBI:18248"/>
    </ligandPart>
</feature>
<feature type="site" description="Transition state stabilizer" evidence="1">
    <location>
        <position position="102"/>
    </location>
</feature>
<feature type="cross-link" description="Tryptophyl-tyrosyl-methioninium (Trp-Tyr) (with M-252)" evidence="1">
    <location>
        <begin position="105"/>
        <end position="226"/>
    </location>
</feature>
<feature type="cross-link" description="Tryptophyl-tyrosyl-methioninium (Tyr-Met) (with W-105)" evidence="1">
    <location>
        <begin position="226"/>
        <end position="252"/>
    </location>
</feature>